<reference key="1">
    <citation type="journal article" date="2001" name="Nature">
        <title>Complete genome sequence of a multiple drug resistant Salmonella enterica serovar Typhi CT18.</title>
        <authorList>
            <person name="Parkhill J."/>
            <person name="Dougan G."/>
            <person name="James K.D."/>
            <person name="Thomson N.R."/>
            <person name="Pickard D."/>
            <person name="Wain J."/>
            <person name="Churcher C.M."/>
            <person name="Mungall K.L."/>
            <person name="Bentley S.D."/>
            <person name="Holden M.T.G."/>
            <person name="Sebaihia M."/>
            <person name="Baker S."/>
            <person name="Basham D."/>
            <person name="Brooks K."/>
            <person name="Chillingworth T."/>
            <person name="Connerton P."/>
            <person name="Cronin A."/>
            <person name="Davis P."/>
            <person name="Davies R.M."/>
            <person name="Dowd L."/>
            <person name="White N."/>
            <person name="Farrar J."/>
            <person name="Feltwell T."/>
            <person name="Hamlin N."/>
            <person name="Haque A."/>
            <person name="Hien T.T."/>
            <person name="Holroyd S."/>
            <person name="Jagels K."/>
            <person name="Krogh A."/>
            <person name="Larsen T.S."/>
            <person name="Leather S."/>
            <person name="Moule S."/>
            <person name="O'Gaora P."/>
            <person name="Parry C."/>
            <person name="Quail M.A."/>
            <person name="Rutherford K.M."/>
            <person name="Simmonds M."/>
            <person name="Skelton J."/>
            <person name="Stevens K."/>
            <person name="Whitehead S."/>
            <person name="Barrell B.G."/>
        </authorList>
    </citation>
    <scope>NUCLEOTIDE SEQUENCE [LARGE SCALE GENOMIC DNA]</scope>
    <source>
        <strain>CT18</strain>
    </source>
</reference>
<reference key="2">
    <citation type="journal article" date="2003" name="J. Bacteriol.">
        <title>Comparative genomics of Salmonella enterica serovar Typhi strains Ty2 and CT18.</title>
        <authorList>
            <person name="Deng W."/>
            <person name="Liou S.-R."/>
            <person name="Plunkett G. III"/>
            <person name="Mayhew G.F."/>
            <person name="Rose D.J."/>
            <person name="Burland V."/>
            <person name="Kodoyianni V."/>
            <person name="Schwartz D.C."/>
            <person name="Blattner F.R."/>
        </authorList>
    </citation>
    <scope>NUCLEOTIDE SEQUENCE [LARGE SCALE GENOMIC DNA]</scope>
    <source>
        <strain>ATCC 700931 / Ty2</strain>
    </source>
</reference>
<organism>
    <name type="scientific">Salmonella typhi</name>
    <dbReference type="NCBI Taxonomy" id="90370"/>
    <lineage>
        <taxon>Bacteria</taxon>
        <taxon>Pseudomonadati</taxon>
        <taxon>Pseudomonadota</taxon>
        <taxon>Gammaproteobacteria</taxon>
        <taxon>Enterobacterales</taxon>
        <taxon>Enterobacteriaceae</taxon>
        <taxon>Salmonella</taxon>
    </lineage>
</organism>
<sequence>MKDELFLRGENVPMTKEAVRALALSKLELHRASHLIDVGAGTGSVSIEAALQFPSLQVTAIERNPAALRLLDENRQRFACGNIDILPGEAPMTITGKADAVFMGGSGGHLTALIDWAMGHLHPGGRLVMTFILQENLHSALAHLVHIGACRMDCVQLQLSSLTPLGAGHYFKPNNPVFVIACQKEENHVRDI</sequence>
<keyword id="KW-0169">Cobalamin biosynthesis</keyword>
<keyword id="KW-0489">Methyltransferase</keyword>
<keyword id="KW-0949">S-adenosyl-L-methionine</keyword>
<keyword id="KW-0808">Transferase</keyword>
<protein>
    <recommendedName>
        <fullName>Cobalt-precorrin-6B C(15)-methyltransferase (decarboxylating)</fullName>
        <ecNumber>2.1.1.196</ecNumber>
    </recommendedName>
</protein>
<dbReference type="EC" id="2.1.1.196"/>
<dbReference type="EMBL" id="AL513382">
    <property type="protein sequence ID" value="CAD02391.1"/>
    <property type="molecule type" value="Genomic_DNA"/>
</dbReference>
<dbReference type="EMBL" id="AE014613">
    <property type="protein sequence ID" value="AAO68531.1"/>
    <property type="molecule type" value="Genomic_DNA"/>
</dbReference>
<dbReference type="RefSeq" id="NP_456581.1">
    <property type="nucleotide sequence ID" value="NC_003198.1"/>
</dbReference>
<dbReference type="RefSeq" id="WP_000650991.1">
    <property type="nucleotide sequence ID" value="NZ_WSUR01000002.1"/>
</dbReference>
<dbReference type="SMR" id="Q8Z5M9"/>
<dbReference type="STRING" id="220341.gene:17586146"/>
<dbReference type="KEGG" id="stt:t0844"/>
<dbReference type="KEGG" id="sty:STY2235"/>
<dbReference type="PATRIC" id="fig|220341.7.peg.2254"/>
<dbReference type="eggNOG" id="COG2242">
    <property type="taxonomic scope" value="Bacteria"/>
</dbReference>
<dbReference type="HOGENOM" id="CLU_094143_0_0_6"/>
<dbReference type="OMA" id="RCKFVYA"/>
<dbReference type="OrthoDB" id="9787825at2"/>
<dbReference type="UniPathway" id="UPA00148">
    <property type="reaction ID" value="UER00229"/>
</dbReference>
<dbReference type="Proteomes" id="UP000000541">
    <property type="component" value="Chromosome"/>
</dbReference>
<dbReference type="Proteomes" id="UP000002670">
    <property type="component" value="Chromosome"/>
</dbReference>
<dbReference type="GO" id="GO:0043776">
    <property type="term" value="F:cobalt-precorrin-6B C5-methyltransferase activity"/>
    <property type="evidence" value="ECO:0007669"/>
    <property type="project" value="RHEA"/>
</dbReference>
<dbReference type="GO" id="GO:0008276">
    <property type="term" value="F:protein methyltransferase activity"/>
    <property type="evidence" value="ECO:0007669"/>
    <property type="project" value="InterPro"/>
</dbReference>
<dbReference type="GO" id="GO:0009236">
    <property type="term" value="P:cobalamin biosynthetic process"/>
    <property type="evidence" value="ECO:0007669"/>
    <property type="project" value="UniProtKB-UniPathway"/>
</dbReference>
<dbReference type="GO" id="GO:0032259">
    <property type="term" value="P:methylation"/>
    <property type="evidence" value="ECO:0007669"/>
    <property type="project" value="UniProtKB-KW"/>
</dbReference>
<dbReference type="CDD" id="cd02440">
    <property type="entry name" value="AdoMet_MTases"/>
    <property type="match status" value="1"/>
</dbReference>
<dbReference type="Gene3D" id="3.40.50.150">
    <property type="entry name" value="Vaccinia Virus protein VP39"/>
    <property type="match status" value="1"/>
</dbReference>
<dbReference type="InterPro" id="IPR014008">
    <property type="entry name" value="Cbl_synth_MTase_CbiT"/>
</dbReference>
<dbReference type="InterPro" id="IPR050714">
    <property type="entry name" value="Cobalamin_biosynth_MTase"/>
</dbReference>
<dbReference type="InterPro" id="IPR029063">
    <property type="entry name" value="SAM-dependent_MTases_sf"/>
</dbReference>
<dbReference type="InterPro" id="IPR007848">
    <property type="entry name" value="Small_mtfrase_dom"/>
</dbReference>
<dbReference type="NCBIfam" id="TIGR02469">
    <property type="entry name" value="CbiT"/>
    <property type="match status" value="1"/>
</dbReference>
<dbReference type="NCBIfam" id="NF006138">
    <property type="entry name" value="PRK08287.1"/>
    <property type="match status" value="1"/>
</dbReference>
<dbReference type="PANTHER" id="PTHR43182">
    <property type="entry name" value="COBALT-PRECORRIN-6B C(15)-METHYLTRANSFERASE (DECARBOXYLATING)"/>
    <property type="match status" value="1"/>
</dbReference>
<dbReference type="PANTHER" id="PTHR43182:SF1">
    <property type="entry name" value="COBALT-PRECORRIN-7 C(5)-METHYLTRANSFERASE"/>
    <property type="match status" value="1"/>
</dbReference>
<dbReference type="Pfam" id="PF05175">
    <property type="entry name" value="MTS"/>
    <property type="match status" value="1"/>
</dbReference>
<dbReference type="SUPFAM" id="SSF53335">
    <property type="entry name" value="S-adenosyl-L-methionine-dependent methyltransferases"/>
    <property type="match status" value="1"/>
</dbReference>
<evidence type="ECO:0000250" key="1"/>
<evidence type="ECO:0000305" key="2"/>
<gene>
    <name type="primary">cbiT</name>
    <name type="ordered locus">STY2235</name>
    <name type="ordered locus">t0844</name>
</gene>
<name>CBIT_SALTI</name>
<proteinExistence type="inferred from homology"/>
<feature type="chain" id="PRO_0000134948" description="Cobalt-precorrin-6B C(15)-methyltransferase (decarboxylating)">
    <location>
        <begin position="1"/>
        <end position="192"/>
    </location>
</feature>
<feature type="binding site" evidence="1">
    <location>
        <position position="15"/>
    </location>
    <ligand>
        <name>S-adenosyl-L-methionine</name>
        <dbReference type="ChEBI" id="CHEBI:59789"/>
    </ligand>
</feature>
<feature type="binding site" evidence="1">
    <location>
        <begin position="39"/>
        <end position="43"/>
    </location>
    <ligand>
        <name>S-adenosyl-L-methionine</name>
        <dbReference type="ChEBI" id="CHEBI:59789"/>
    </ligand>
</feature>
<feature type="binding site" evidence="1">
    <location>
        <position position="62"/>
    </location>
    <ligand>
        <name>S-adenosyl-L-methionine</name>
        <dbReference type="ChEBI" id="CHEBI:59789"/>
    </ligand>
</feature>
<feature type="binding site" evidence="1">
    <location>
        <position position="90"/>
    </location>
    <ligand>
        <name>S-adenosyl-L-methionine</name>
        <dbReference type="ChEBI" id="CHEBI:59789"/>
    </ligand>
</feature>
<comment type="function">
    <text evidence="1">Catalyzes the methylation of C-15 in cobalt-precorrin-6B followed by the decarboxylation of C-12 to form cobalt-precorrin-7.</text>
</comment>
<comment type="catalytic activity">
    <reaction>
        <text>Co-precorrin-6B + S-adenosyl-L-methionine = Co-precorrin-7 + S-adenosyl-L-homocysteine + CO2</text>
        <dbReference type="Rhea" id="RHEA:36067"/>
        <dbReference type="ChEBI" id="CHEBI:16526"/>
        <dbReference type="ChEBI" id="CHEBI:57856"/>
        <dbReference type="ChEBI" id="CHEBI:59789"/>
        <dbReference type="ChEBI" id="CHEBI:70791"/>
        <dbReference type="ChEBI" id="CHEBI:72780"/>
        <dbReference type="EC" id="2.1.1.196"/>
    </reaction>
</comment>
<comment type="pathway">
    <text>Cofactor biosynthesis; adenosylcobalamin biosynthesis; cob(II)yrinate a,c-diamide from sirohydrochlorin (anaerobic route): step 8/10.</text>
</comment>
<comment type="similarity">
    <text evidence="2">Belongs to the methyltransferase superfamily. Bacterial-type CbiT family.</text>
</comment>
<accession>Q8Z5M9</accession>